<evidence type="ECO:0000255" key="1"/>
<accession>P76001</accession>
<proteinExistence type="inferred from homology"/>
<reference key="1">
    <citation type="journal article" date="1996" name="DNA Res.">
        <title>A 718-kb DNA sequence of the Escherichia coli K-12 genome corresponding to the 12.7-28.0 min region on the linkage map.</title>
        <authorList>
            <person name="Oshima T."/>
            <person name="Aiba H."/>
            <person name="Baba T."/>
            <person name="Fujita K."/>
            <person name="Hayashi K."/>
            <person name="Honjo A."/>
            <person name="Ikemoto K."/>
            <person name="Inada T."/>
            <person name="Itoh T."/>
            <person name="Kajihara M."/>
            <person name="Kanai K."/>
            <person name="Kashimoto K."/>
            <person name="Kimura S."/>
            <person name="Kitagawa M."/>
            <person name="Makino K."/>
            <person name="Masuda S."/>
            <person name="Miki T."/>
            <person name="Mizobuchi K."/>
            <person name="Mori H."/>
            <person name="Motomura K."/>
            <person name="Nakamura Y."/>
            <person name="Nashimoto H."/>
            <person name="Nishio Y."/>
            <person name="Saito N."/>
            <person name="Sampei G."/>
            <person name="Seki Y."/>
            <person name="Tagami H."/>
            <person name="Takemoto K."/>
            <person name="Wada C."/>
            <person name="Yamamoto Y."/>
            <person name="Yano M."/>
            <person name="Horiuchi T."/>
        </authorList>
    </citation>
    <scope>NUCLEOTIDE SEQUENCE [LARGE SCALE GENOMIC DNA]</scope>
    <source>
        <strain>K12 / W3110 / ATCC 27325 / DSM 5911</strain>
    </source>
</reference>
<reference key="2">
    <citation type="journal article" date="1997" name="Science">
        <title>The complete genome sequence of Escherichia coli K-12.</title>
        <authorList>
            <person name="Blattner F.R."/>
            <person name="Plunkett G. III"/>
            <person name="Bloch C.A."/>
            <person name="Perna N.T."/>
            <person name="Burland V."/>
            <person name="Riley M."/>
            <person name="Collado-Vides J."/>
            <person name="Glasner J.D."/>
            <person name="Rode C.K."/>
            <person name="Mayhew G.F."/>
            <person name="Gregor J."/>
            <person name="Davis N.W."/>
            <person name="Kirkpatrick H.A."/>
            <person name="Goeden M.A."/>
            <person name="Rose D.J."/>
            <person name="Mau B."/>
            <person name="Shao Y."/>
        </authorList>
    </citation>
    <scope>NUCLEOTIDE SEQUENCE [LARGE SCALE GENOMIC DNA]</scope>
    <source>
        <strain>K12 / MG1655 / ATCC 47076</strain>
    </source>
</reference>
<reference key="3">
    <citation type="journal article" date="2006" name="Mol. Syst. Biol.">
        <title>Highly accurate genome sequences of Escherichia coli K-12 strains MG1655 and W3110.</title>
        <authorList>
            <person name="Hayashi K."/>
            <person name="Morooka N."/>
            <person name="Yamamoto Y."/>
            <person name="Fujita K."/>
            <person name="Isono K."/>
            <person name="Choi S."/>
            <person name="Ohtsubo E."/>
            <person name="Baba T."/>
            <person name="Wanner B.L."/>
            <person name="Mori H."/>
            <person name="Horiuchi T."/>
        </authorList>
    </citation>
    <scope>NUCLEOTIDE SEQUENCE [LARGE SCALE GENOMIC DNA]</scope>
    <source>
        <strain>K12 / W3110 / ATCC 27325 / DSM 5911</strain>
    </source>
</reference>
<feature type="signal peptide" evidence="1">
    <location>
        <begin position="1"/>
        <end position="22"/>
    </location>
</feature>
<feature type="chain" id="PRO_0000013827" description="Uncharacterized protein YcgJ">
    <location>
        <begin position="23"/>
        <end position="122"/>
    </location>
</feature>
<gene>
    <name type="primary">ycgJ</name>
    <name type="ordered locus">b1177</name>
    <name type="ordered locus">JW1166</name>
</gene>
<dbReference type="EMBL" id="U00096">
    <property type="protein sequence ID" value="AAC74261.1"/>
    <property type="molecule type" value="Genomic_DNA"/>
</dbReference>
<dbReference type="EMBL" id="AP009048">
    <property type="protein sequence ID" value="BAA36011.1"/>
    <property type="molecule type" value="Genomic_DNA"/>
</dbReference>
<dbReference type="PIR" id="F64863">
    <property type="entry name" value="F64863"/>
</dbReference>
<dbReference type="RefSeq" id="NP_415695.1">
    <property type="nucleotide sequence ID" value="NC_000913.3"/>
</dbReference>
<dbReference type="RefSeq" id="WP_001056840.1">
    <property type="nucleotide sequence ID" value="NZ_SSUV01000036.1"/>
</dbReference>
<dbReference type="BioGRID" id="4262871">
    <property type="interactions" value="14"/>
</dbReference>
<dbReference type="FunCoup" id="P76001">
    <property type="interactions" value="62"/>
</dbReference>
<dbReference type="STRING" id="511145.b1177"/>
<dbReference type="PaxDb" id="511145-b1177"/>
<dbReference type="EnsemblBacteria" id="AAC74261">
    <property type="protein sequence ID" value="AAC74261"/>
    <property type="gene ID" value="b1177"/>
</dbReference>
<dbReference type="GeneID" id="946155"/>
<dbReference type="KEGG" id="ecj:JW1166"/>
<dbReference type="KEGG" id="eco:b1177"/>
<dbReference type="KEGG" id="ecoc:C3026_06935"/>
<dbReference type="PATRIC" id="fig|511145.12.peg.1221"/>
<dbReference type="EchoBASE" id="EB3650"/>
<dbReference type="eggNOG" id="ENOG5032QJR">
    <property type="taxonomic scope" value="Bacteria"/>
</dbReference>
<dbReference type="HOGENOM" id="CLU_136126_0_0_6"/>
<dbReference type="InParanoid" id="P76001"/>
<dbReference type="OMA" id="GIFCDVK"/>
<dbReference type="OrthoDB" id="5815745at2"/>
<dbReference type="BioCyc" id="EcoCyc:G6614-MONOMER"/>
<dbReference type="PRO" id="PR:P76001"/>
<dbReference type="Proteomes" id="UP000000625">
    <property type="component" value="Chromosome"/>
</dbReference>
<dbReference type="InterPro" id="IPR008617">
    <property type="entry name" value="Uncharacterised_YcgJ"/>
</dbReference>
<dbReference type="Pfam" id="PF05666">
    <property type="entry name" value="YcgJ"/>
    <property type="match status" value="1"/>
</dbReference>
<protein>
    <recommendedName>
        <fullName>Uncharacterized protein YcgJ</fullName>
    </recommendedName>
</protein>
<name>YCGJ_ECOLI</name>
<organism>
    <name type="scientific">Escherichia coli (strain K12)</name>
    <dbReference type="NCBI Taxonomy" id="83333"/>
    <lineage>
        <taxon>Bacteria</taxon>
        <taxon>Pseudomonadati</taxon>
        <taxon>Pseudomonadota</taxon>
        <taxon>Gammaproteobacteria</taxon>
        <taxon>Enterobacterales</taxon>
        <taxon>Enterobacteriaceae</taxon>
        <taxon>Escherichia</taxon>
    </lineage>
</organism>
<sequence>MNMMRIFYIGLSGVGMMFSSMASGNDAGGLQSPACGVVCDPYICVNSDGISPELTRKYLGEKAAENLQSLQGYDPSEFTFANGVFCDVKEKLCRDDRYFGVDGKRSGKINQTTTKMLFMCRE</sequence>
<keyword id="KW-1185">Reference proteome</keyword>
<keyword id="KW-0732">Signal</keyword>